<protein>
    <recommendedName>
        <fullName evidence="1">Acetyl-coenzyme A carboxylase carboxyl transferase subunit alpha</fullName>
        <shortName evidence="1">ACCase subunit alpha</shortName>
        <shortName evidence="1">Acetyl-CoA carboxylase carboxyltransferase subunit alpha</shortName>
        <ecNumber evidence="1">2.1.3.15</ecNumber>
    </recommendedName>
</protein>
<evidence type="ECO:0000255" key="1">
    <source>
        <dbReference type="HAMAP-Rule" id="MF_00823"/>
    </source>
</evidence>
<evidence type="ECO:0000255" key="2">
    <source>
        <dbReference type="PROSITE-ProRule" id="PRU01137"/>
    </source>
</evidence>
<sequence length="319" mass="35242">MSLNFLDFEQPIAELEAKIDSLTAVSRQDEKLDINIDEEVHRLREKSVELTRKIFADLGAWQIAQLARHPQRPYTLDYVRLAFDEFDELAGDRAYADDKAIVGGIARLDGRPVMIIGHQKGRETKEKIRRNFGMPAPEGYRKALRLMQMAERFKMPIITFIDTPGAYPGVGAEERGQSEAIARNLREMSRLGVPVVCTVIGEGGSGGALAIGVGDKVNMLQYSTYSVISPEGCASILWKSADKAPLAAEAMGIIAPRLKELKLIDSIIPEPLGGAHRNPEAMAASLKAQLLADLADLDVLSTEDLKNRRYQRLMSYGYA</sequence>
<accession>Q0T824</accession>
<proteinExistence type="inferred from homology"/>
<keyword id="KW-0067">ATP-binding</keyword>
<keyword id="KW-0963">Cytoplasm</keyword>
<keyword id="KW-0275">Fatty acid biosynthesis</keyword>
<keyword id="KW-0276">Fatty acid metabolism</keyword>
<keyword id="KW-0444">Lipid biosynthesis</keyword>
<keyword id="KW-0443">Lipid metabolism</keyword>
<keyword id="KW-0547">Nucleotide-binding</keyword>
<keyword id="KW-0808">Transferase</keyword>
<feature type="chain" id="PRO_1000062672" description="Acetyl-coenzyme A carboxylase carboxyl transferase subunit alpha">
    <location>
        <begin position="1"/>
        <end position="319"/>
    </location>
</feature>
<feature type="domain" description="CoA carboxyltransferase C-terminal" evidence="2">
    <location>
        <begin position="35"/>
        <end position="296"/>
    </location>
</feature>
<comment type="function">
    <text evidence="1">Component of the acetyl coenzyme A carboxylase (ACC) complex. First, biotin carboxylase catalyzes the carboxylation of biotin on its carrier protein (BCCP) and then the CO(2) group is transferred by the carboxyltransferase to acetyl-CoA to form malonyl-CoA.</text>
</comment>
<comment type="catalytic activity">
    <reaction evidence="1">
        <text>N(6)-carboxybiotinyl-L-lysyl-[protein] + acetyl-CoA = N(6)-biotinyl-L-lysyl-[protein] + malonyl-CoA</text>
        <dbReference type="Rhea" id="RHEA:54728"/>
        <dbReference type="Rhea" id="RHEA-COMP:10505"/>
        <dbReference type="Rhea" id="RHEA-COMP:10506"/>
        <dbReference type="ChEBI" id="CHEBI:57288"/>
        <dbReference type="ChEBI" id="CHEBI:57384"/>
        <dbReference type="ChEBI" id="CHEBI:83144"/>
        <dbReference type="ChEBI" id="CHEBI:83145"/>
        <dbReference type="EC" id="2.1.3.15"/>
    </reaction>
</comment>
<comment type="pathway">
    <text evidence="1">Lipid metabolism; malonyl-CoA biosynthesis; malonyl-CoA from acetyl-CoA: step 1/1.</text>
</comment>
<comment type="subunit">
    <text evidence="1">Acetyl-CoA carboxylase is a heterohexamer composed of biotin carboxyl carrier protein (AccB), biotin carboxylase (AccC) and two subunits each of ACCase subunit alpha (AccA) and ACCase subunit beta (AccD).</text>
</comment>
<comment type="subcellular location">
    <subcellularLocation>
        <location evidence="1">Cytoplasm</location>
    </subcellularLocation>
</comment>
<comment type="similarity">
    <text evidence="1">Belongs to the AccA family.</text>
</comment>
<dbReference type="EC" id="2.1.3.15" evidence="1"/>
<dbReference type="EMBL" id="CP000266">
    <property type="protein sequence ID" value="ABF02452.1"/>
    <property type="molecule type" value="Genomic_DNA"/>
</dbReference>
<dbReference type="RefSeq" id="WP_000055741.1">
    <property type="nucleotide sequence ID" value="NC_008258.1"/>
</dbReference>
<dbReference type="SMR" id="Q0T824"/>
<dbReference type="GeneID" id="86945115"/>
<dbReference type="KEGG" id="sfv:SFV_0168"/>
<dbReference type="HOGENOM" id="CLU_015486_0_2_6"/>
<dbReference type="UniPathway" id="UPA00655">
    <property type="reaction ID" value="UER00711"/>
</dbReference>
<dbReference type="Proteomes" id="UP000000659">
    <property type="component" value="Chromosome"/>
</dbReference>
<dbReference type="GO" id="GO:0009317">
    <property type="term" value="C:acetyl-CoA carboxylase complex"/>
    <property type="evidence" value="ECO:0007669"/>
    <property type="project" value="InterPro"/>
</dbReference>
<dbReference type="GO" id="GO:0003989">
    <property type="term" value="F:acetyl-CoA carboxylase activity"/>
    <property type="evidence" value="ECO:0007669"/>
    <property type="project" value="InterPro"/>
</dbReference>
<dbReference type="GO" id="GO:0005524">
    <property type="term" value="F:ATP binding"/>
    <property type="evidence" value="ECO:0007669"/>
    <property type="project" value="UniProtKB-KW"/>
</dbReference>
<dbReference type="GO" id="GO:0016743">
    <property type="term" value="F:carboxyl- or carbamoyltransferase activity"/>
    <property type="evidence" value="ECO:0007669"/>
    <property type="project" value="UniProtKB-UniRule"/>
</dbReference>
<dbReference type="GO" id="GO:0006633">
    <property type="term" value="P:fatty acid biosynthetic process"/>
    <property type="evidence" value="ECO:0007669"/>
    <property type="project" value="UniProtKB-KW"/>
</dbReference>
<dbReference type="GO" id="GO:2001295">
    <property type="term" value="P:malonyl-CoA biosynthetic process"/>
    <property type="evidence" value="ECO:0007669"/>
    <property type="project" value="UniProtKB-UniRule"/>
</dbReference>
<dbReference type="FunFam" id="3.90.226.10:FF:000008">
    <property type="entry name" value="Acetyl-coenzyme A carboxylase carboxyl transferase subunit alpha"/>
    <property type="match status" value="1"/>
</dbReference>
<dbReference type="Gene3D" id="3.90.226.10">
    <property type="entry name" value="2-enoyl-CoA Hydratase, Chain A, domain 1"/>
    <property type="match status" value="1"/>
</dbReference>
<dbReference type="HAMAP" id="MF_00823">
    <property type="entry name" value="AcetylCoA_CT_alpha"/>
    <property type="match status" value="1"/>
</dbReference>
<dbReference type="InterPro" id="IPR001095">
    <property type="entry name" value="Acetyl_CoA_COase_a_su"/>
</dbReference>
<dbReference type="InterPro" id="IPR029045">
    <property type="entry name" value="ClpP/crotonase-like_dom_sf"/>
</dbReference>
<dbReference type="InterPro" id="IPR011763">
    <property type="entry name" value="COA_CT_C"/>
</dbReference>
<dbReference type="NCBIfam" id="TIGR00513">
    <property type="entry name" value="accA"/>
    <property type="match status" value="1"/>
</dbReference>
<dbReference type="NCBIfam" id="NF041504">
    <property type="entry name" value="AccA_sub"/>
    <property type="match status" value="1"/>
</dbReference>
<dbReference type="NCBIfam" id="NF004344">
    <property type="entry name" value="PRK05724.1"/>
    <property type="match status" value="1"/>
</dbReference>
<dbReference type="PANTHER" id="PTHR42853">
    <property type="entry name" value="ACETYL-COENZYME A CARBOXYLASE CARBOXYL TRANSFERASE SUBUNIT ALPHA"/>
    <property type="match status" value="1"/>
</dbReference>
<dbReference type="PANTHER" id="PTHR42853:SF3">
    <property type="entry name" value="ACETYL-COENZYME A CARBOXYLASE CARBOXYL TRANSFERASE SUBUNIT ALPHA, CHLOROPLASTIC"/>
    <property type="match status" value="1"/>
</dbReference>
<dbReference type="Pfam" id="PF03255">
    <property type="entry name" value="ACCA"/>
    <property type="match status" value="1"/>
</dbReference>
<dbReference type="PRINTS" id="PR01069">
    <property type="entry name" value="ACCCTRFRASEA"/>
</dbReference>
<dbReference type="SUPFAM" id="SSF52096">
    <property type="entry name" value="ClpP/crotonase"/>
    <property type="match status" value="1"/>
</dbReference>
<dbReference type="PROSITE" id="PS50989">
    <property type="entry name" value="COA_CT_CTER"/>
    <property type="match status" value="1"/>
</dbReference>
<organism>
    <name type="scientific">Shigella flexneri serotype 5b (strain 8401)</name>
    <dbReference type="NCBI Taxonomy" id="373384"/>
    <lineage>
        <taxon>Bacteria</taxon>
        <taxon>Pseudomonadati</taxon>
        <taxon>Pseudomonadota</taxon>
        <taxon>Gammaproteobacteria</taxon>
        <taxon>Enterobacterales</taxon>
        <taxon>Enterobacteriaceae</taxon>
        <taxon>Shigella</taxon>
    </lineage>
</organism>
<gene>
    <name evidence="1" type="primary">accA</name>
    <name type="ordered locus">SFV_0168</name>
</gene>
<name>ACCA_SHIF8</name>
<reference key="1">
    <citation type="journal article" date="2006" name="BMC Genomics">
        <title>Complete genome sequence of Shigella flexneri 5b and comparison with Shigella flexneri 2a.</title>
        <authorList>
            <person name="Nie H."/>
            <person name="Yang F."/>
            <person name="Zhang X."/>
            <person name="Yang J."/>
            <person name="Chen L."/>
            <person name="Wang J."/>
            <person name="Xiong Z."/>
            <person name="Peng J."/>
            <person name="Sun L."/>
            <person name="Dong J."/>
            <person name="Xue Y."/>
            <person name="Xu X."/>
            <person name="Chen S."/>
            <person name="Yao Z."/>
            <person name="Shen Y."/>
            <person name="Jin Q."/>
        </authorList>
    </citation>
    <scope>NUCLEOTIDE SEQUENCE [LARGE SCALE GENOMIC DNA]</scope>
    <source>
        <strain>8401</strain>
    </source>
</reference>